<evidence type="ECO:0000255" key="1">
    <source>
        <dbReference type="HAMAP-Rule" id="MF_00169"/>
    </source>
</evidence>
<evidence type="ECO:0007829" key="2">
    <source>
        <dbReference type="PDB" id="3LWZ"/>
    </source>
</evidence>
<organism>
    <name type="scientific">Yersinia pestis</name>
    <dbReference type="NCBI Taxonomy" id="632"/>
    <lineage>
        <taxon>Bacteria</taxon>
        <taxon>Pseudomonadati</taxon>
        <taxon>Pseudomonadota</taxon>
        <taxon>Gammaproteobacteria</taxon>
        <taxon>Enterobacterales</taxon>
        <taxon>Yersiniaceae</taxon>
        <taxon>Yersinia</taxon>
    </lineage>
</organism>
<accession>Q8ZAX1</accession>
<accession>Q0WAZ2</accession>
<protein>
    <recommendedName>
        <fullName evidence="1">3-dehydroquinate dehydratase</fullName>
        <shortName evidence="1">3-dehydroquinase</shortName>
        <ecNumber evidence="1">4.2.1.10</ecNumber>
    </recommendedName>
    <alternativeName>
        <fullName evidence="1">Type II DHQase</fullName>
    </alternativeName>
</protein>
<gene>
    <name evidence="1" type="primary">aroQ</name>
    <name type="ordered locus">YPO3660</name>
    <name type="ordered locus">y0207</name>
    <name type="ordered locus">YP_3886</name>
</gene>
<feature type="chain" id="PRO_0000159946" description="3-dehydroquinate dehydratase">
    <location>
        <begin position="1"/>
        <end position="150"/>
    </location>
</feature>
<feature type="active site" description="Proton acceptor" evidence="1">
    <location>
        <position position="26"/>
    </location>
</feature>
<feature type="active site" description="Proton donor" evidence="1">
    <location>
        <position position="103"/>
    </location>
</feature>
<feature type="binding site" evidence="1">
    <location>
        <position position="77"/>
    </location>
    <ligand>
        <name>substrate</name>
    </ligand>
</feature>
<feature type="binding site" evidence="1">
    <location>
        <position position="83"/>
    </location>
    <ligand>
        <name>substrate</name>
    </ligand>
</feature>
<feature type="binding site" evidence="1">
    <location>
        <position position="90"/>
    </location>
    <ligand>
        <name>substrate</name>
    </ligand>
</feature>
<feature type="binding site" evidence="1">
    <location>
        <begin position="104"/>
        <end position="105"/>
    </location>
    <ligand>
        <name>substrate</name>
    </ligand>
</feature>
<feature type="binding site" evidence="1">
    <location>
        <position position="114"/>
    </location>
    <ligand>
        <name>substrate</name>
    </ligand>
</feature>
<feature type="site" description="Transition state stabilizer" evidence="1">
    <location>
        <position position="21"/>
    </location>
</feature>
<feature type="strand" evidence="2">
    <location>
        <begin position="5"/>
        <end position="11"/>
    </location>
</feature>
<feature type="helix" evidence="2">
    <location>
        <begin position="15"/>
        <end position="17"/>
    </location>
</feature>
<feature type="turn" evidence="2">
    <location>
        <begin position="18"/>
        <end position="20"/>
    </location>
</feature>
<feature type="helix" evidence="2">
    <location>
        <begin position="23"/>
        <end position="26"/>
    </location>
</feature>
<feature type="helix" evidence="2">
    <location>
        <begin position="31"/>
        <end position="44"/>
    </location>
</feature>
<feature type="strand" evidence="2">
    <location>
        <begin position="47"/>
        <end position="53"/>
    </location>
</feature>
<feature type="helix" evidence="2">
    <location>
        <begin position="57"/>
        <end position="67"/>
    </location>
</feature>
<feature type="turn" evidence="2">
    <location>
        <begin position="68"/>
        <end position="70"/>
    </location>
</feature>
<feature type="strand" evidence="2">
    <location>
        <begin position="72"/>
        <end position="77"/>
    </location>
</feature>
<feature type="helix" evidence="2">
    <location>
        <begin position="79"/>
        <end position="83"/>
    </location>
</feature>
<feature type="helix" evidence="2">
    <location>
        <begin position="86"/>
        <end position="95"/>
    </location>
</feature>
<feature type="strand" evidence="2">
    <location>
        <begin position="99"/>
        <end position="105"/>
    </location>
</feature>
<feature type="helix" evidence="2">
    <location>
        <begin position="107"/>
        <end position="109"/>
    </location>
</feature>
<feature type="helix" evidence="2">
    <location>
        <begin position="112"/>
        <end position="115"/>
    </location>
</feature>
<feature type="helix" evidence="2">
    <location>
        <begin position="120"/>
        <end position="122"/>
    </location>
</feature>
<feature type="strand" evidence="2">
    <location>
        <begin position="123"/>
        <end position="130"/>
    </location>
</feature>
<feature type="helix" evidence="2">
    <location>
        <begin position="133"/>
        <end position="148"/>
    </location>
</feature>
<keyword id="KW-0002">3D-structure</keyword>
<keyword id="KW-0028">Amino-acid biosynthesis</keyword>
<keyword id="KW-0057">Aromatic amino acid biosynthesis</keyword>
<keyword id="KW-0456">Lyase</keyword>
<keyword id="KW-1185">Reference proteome</keyword>
<comment type="function">
    <text evidence="1">Catalyzes a trans-dehydration via an enolate intermediate.</text>
</comment>
<comment type="catalytic activity">
    <reaction evidence="1">
        <text>3-dehydroquinate = 3-dehydroshikimate + H2O</text>
        <dbReference type="Rhea" id="RHEA:21096"/>
        <dbReference type="ChEBI" id="CHEBI:15377"/>
        <dbReference type="ChEBI" id="CHEBI:16630"/>
        <dbReference type="ChEBI" id="CHEBI:32364"/>
        <dbReference type="EC" id="4.2.1.10"/>
    </reaction>
</comment>
<comment type="pathway">
    <text evidence="1">Metabolic intermediate biosynthesis; chorismate biosynthesis; chorismate from D-erythrose 4-phosphate and phosphoenolpyruvate: step 3/7.</text>
</comment>
<comment type="subunit">
    <text evidence="1">Homododecamer.</text>
</comment>
<comment type="similarity">
    <text evidence="1">Belongs to the type-II 3-dehydroquinase family.</text>
</comment>
<proteinExistence type="evidence at protein level"/>
<name>AROQ_YERPE</name>
<reference key="1">
    <citation type="journal article" date="2001" name="Nature">
        <title>Genome sequence of Yersinia pestis, the causative agent of plague.</title>
        <authorList>
            <person name="Parkhill J."/>
            <person name="Wren B.W."/>
            <person name="Thomson N.R."/>
            <person name="Titball R.W."/>
            <person name="Holden M.T.G."/>
            <person name="Prentice M.B."/>
            <person name="Sebaihia M."/>
            <person name="James K.D."/>
            <person name="Churcher C.M."/>
            <person name="Mungall K.L."/>
            <person name="Baker S."/>
            <person name="Basham D."/>
            <person name="Bentley S.D."/>
            <person name="Brooks K."/>
            <person name="Cerdeno-Tarraga A.-M."/>
            <person name="Chillingworth T."/>
            <person name="Cronin A."/>
            <person name="Davies R.M."/>
            <person name="Davis P."/>
            <person name="Dougan G."/>
            <person name="Feltwell T."/>
            <person name="Hamlin N."/>
            <person name="Holroyd S."/>
            <person name="Jagels K."/>
            <person name="Karlyshev A.V."/>
            <person name="Leather S."/>
            <person name="Moule S."/>
            <person name="Oyston P.C.F."/>
            <person name="Quail M.A."/>
            <person name="Rutherford K.M."/>
            <person name="Simmonds M."/>
            <person name="Skelton J."/>
            <person name="Stevens K."/>
            <person name="Whitehead S."/>
            <person name="Barrell B.G."/>
        </authorList>
    </citation>
    <scope>NUCLEOTIDE SEQUENCE [LARGE SCALE GENOMIC DNA]</scope>
    <source>
        <strain>CO-92 / Biovar Orientalis</strain>
    </source>
</reference>
<reference key="2">
    <citation type="journal article" date="2002" name="J. Bacteriol.">
        <title>Genome sequence of Yersinia pestis KIM.</title>
        <authorList>
            <person name="Deng W."/>
            <person name="Burland V."/>
            <person name="Plunkett G. III"/>
            <person name="Boutin A."/>
            <person name="Mayhew G.F."/>
            <person name="Liss P."/>
            <person name="Perna N.T."/>
            <person name="Rose D.J."/>
            <person name="Mau B."/>
            <person name="Zhou S."/>
            <person name="Schwartz D.C."/>
            <person name="Fetherston J.D."/>
            <person name="Lindler L.E."/>
            <person name="Brubaker R.R."/>
            <person name="Plano G.V."/>
            <person name="Straley S.C."/>
            <person name="McDonough K.A."/>
            <person name="Nilles M.L."/>
            <person name="Matson J.S."/>
            <person name="Blattner F.R."/>
            <person name="Perry R.D."/>
        </authorList>
    </citation>
    <scope>NUCLEOTIDE SEQUENCE [LARGE SCALE GENOMIC DNA]</scope>
    <source>
        <strain>KIM10+ / Biovar Mediaevalis</strain>
    </source>
</reference>
<reference key="3">
    <citation type="journal article" date="2004" name="DNA Res.">
        <title>Complete genome sequence of Yersinia pestis strain 91001, an isolate avirulent to humans.</title>
        <authorList>
            <person name="Song Y."/>
            <person name="Tong Z."/>
            <person name="Wang J."/>
            <person name="Wang L."/>
            <person name="Guo Z."/>
            <person name="Han Y."/>
            <person name="Zhang J."/>
            <person name="Pei D."/>
            <person name="Zhou D."/>
            <person name="Qin H."/>
            <person name="Pang X."/>
            <person name="Han Y."/>
            <person name="Zhai J."/>
            <person name="Li M."/>
            <person name="Cui B."/>
            <person name="Qi Z."/>
            <person name="Jin L."/>
            <person name="Dai R."/>
            <person name="Chen F."/>
            <person name="Li S."/>
            <person name="Ye C."/>
            <person name="Du Z."/>
            <person name="Lin W."/>
            <person name="Wang J."/>
            <person name="Yu J."/>
            <person name="Yang H."/>
            <person name="Wang J."/>
            <person name="Huang P."/>
            <person name="Yang R."/>
        </authorList>
    </citation>
    <scope>NUCLEOTIDE SEQUENCE [LARGE SCALE GENOMIC DNA]</scope>
    <source>
        <strain>91001 / Biovar Mediaevalis</strain>
    </source>
</reference>
<dbReference type="EC" id="4.2.1.10" evidence="1"/>
<dbReference type="EMBL" id="AL590842">
    <property type="protein sequence ID" value="CAL22249.1"/>
    <property type="molecule type" value="Genomic_DNA"/>
</dbReference>
<dbReference type="EMBL" id="AE009952">
    <property type="protein sequence ID" value="AAM83801.1"/>
    <property type="molecule type" value="Genomic_DNA"/>
</dbReference>
<dbReference type="EMBL" id="AE017042">
    <property type="protein sequence ID" value="AAS64031.1"/>
    <property type="molecule type" value="Genomic_DNA"/>
</dbReference>
<dbReference type="PIR" id="AF0445">
    <property type="entry name" value="AF0445"/>
</dbReference>
<dbReference type="RefSeq" id="WP_002210071.1">
    <property type="nucleotide sequence ID" value="NZ_WUCM01000059.1"/>
</dbReference>
<dbReference type="RefSeq" id="YP_002348546.1">
    <property type="nucleotide sequence ID" value="NC_003143.1"/>
</dbReference>
<dbReference type="PDB" id="3LWZ">
    <property type="method" value="X-ray"/>
    <property type="resolution" value="1.65 A"/>
    <property type="chains" value="A/B/C/D=1-150"/>
</dbReference>
<dbReference type="PDBsum" id="3LWZ"/>
<dbReference type="SMR" id="Q8ZAX1"/>
<dbReference type="STRING" id="214092.YPO3660"/>
<dbReference type="PaxDb" id="214092-YPO3660"/>
<dbReference type="DNASU" id="1145154"/>
<dbReference type="EnsemblBacteria" id="AAS64031">
    <property type="protein sequence ID" value="AAS64031"/>
    <property type="gene ID" value="YP_3886"/>
</dbReference>
<dbReference type="GeneID" id="57975085"/>
<dbReference type="KEGG" id="ype:YPO3660"/>
<dbReference type="KEGG" id="ypk:y0207"/>
<dbReference type="KEGG" id="ypm:YP_3886"/>
<dbReference type="PATRIC" id="fig|214092.21.peg.4165"/>
<dbReference type="eggNOG" id="COG0757">
    <property type="taxonomic scope" value="Bacteria"/>
</dbReference>
<dbReference type="HOGENOM" id="CLU_090968_1_0_6"/>
<dbReference type="OMA" id="AYTHYSY"/>
<dbReference type="OrthoDB" id="9790793at2"/>
<dbReference type="UniPathway" id="UPA00053">
    <property type="reaction ID" value="UER00086"/>
</dbReference>
<dbReference type="EvolutionaryTrace" id="Q8ZAX1"/>
<dbReference type="Proteomes" id="UP000000815">
    <property type="component" value="Chromosome"/>
</dbReference>
<dbReference type="Proteomes" id="UP000001019">
    <property type="component" value="Chromosome"/>
</dbReference>
<dbReference type="Proteomes" id="UP000002490">
    <property type="component" value="Chromosome"/>
</dbReference>
<dbReference type="GO" id="GO:0003855">
    <property type="term" value="F:3-dehydroquinate dehydratase activity"/>
    <property type="evidence" value="ECO:0000318"/>
    <property type="project" value="GO_Central"/>
</dbReference>
<dbReference type="GO" id="GO:0008652">
    <property type="term" value="P:amino acid biosynthetic process"/>
    <property type="evidence" value="ECO:0007669"/>
    <property type="project" value="UniProtKB-KW"/>
</dbReference>
<dbReference type="GO" id="GO:0009073">
    <property type="term" value="P:aromatic amino acid family biosynthetic process"/>
    <property type="evidence" value="ECO:0007669"/>
    <property type="project" value="UniProtKB-KW"/>
</dbReference>
<dbReference type="GO" id="GO:0009423">
    <property type="term" value="P:chorismate biosynthetic process"/>
    <property type="evidence" value="ECO:0007669"/>
    <property type="project" value="UniProtKB-UniRule"/>
</dbReference>
<dbReference type="GO" id="GO:0019631">
    <property type="term" value="P:quinate catabolic process"/>
    <property type="evidence" value="ECO:0000318"/>
    <property type="project" value="GO_Central"/>
</dbReference>
<dbReference type="CDD" id="cd00466">
    <property type="entry name" value="DHQase_II"/>
    <property type="match status" value="1"/>
</dbReference>
<dbReference type="Gene3D" id="3.40.50.9100">
    <property type="entry name" value="Dehydroquinase, class II"/>
    <property type="match status" value="1"/>
</dbReference>
<dbReference type="HAMAP" id="MF_00169">
    <property type="entry name" value="AroQ"/>
    <property type="match status" value="1"/>
</dbReference>
<dbReference type="InterPro" id="IPR001874">
    <property type="entry name" value="DHquinase_II"/>
</dbReference>
<dbReference type="InterPro" id="IPR018509">
    <property type="entry name" value="DHquinase_II_CS"/>
</dbReference>
<dbReference type="InterPro" id="IPR036441">
    <property type="entry name" value="DHquinase_II_sf"/>
</dbReference>
<dbReference type="NCBIfam" id="TIGR01088">
    <property type="entry name" value="aroQ"/>
    <property type="match status" value="1"/>
</dbReference>
<dbReference type="NCBIfam" id="NF003804">
    <property type="entry name" value="PRK05395.1-1"/>
    <property type="match status" value="1"/>
</dbReference>
<dbReference type="NCBIfam" id="NF003805">
    <property type="entry name" value="PRK05395.1-2"/>
    <property type="match status" value="1"/>
</dbReference>
<dbReference type="NCBIfam" id="NF003806">
    <property type="entry name" value="PRK05395.1-3"/>
    <property type="match status" value="1"/>
</dbReference>
<dbReference type="NCBIfam" id="NF003807">
    <property type="entry name" value="PRK05395.1-4"/>
    <property type="match status" value="1"/>
</dbReference>
<dbReference type="PANTHER" id="PTHR21272">
    <property type="entry name" value="CATABOLIC 3-DEHYDROQUINASE"/>
    <property type="match status" value="1"/>
</dbReference>
<dbReference type="PANTHER" id="PTHR21272:SF3">
    <property type="entry name" value="CATABOLIC 3-DEHYDROQUINASE"/>
    <property type="match status" value="1"/>
</dbReference>
<dbReference type="Pfam" id="PF01220">
    <property type="entry name" value="DHquinase_II"/>
    <property type="match status" value="1"/>
</dbReference>
<dbReference type="PIRSF" id="PIRSF001399">
    <property type="entry name" value="DHquinase_II"/>
    <property type="match status" value="1"/>
</dbReference>
<dbReference type="SUPFAM" id="SSF52304">
    <property type="entry name" value="Type II 3-dehydroquinate dehydratase"/>
    <property type="match status" value="1"/>
</dbReference>
<dbReference type="PROSITE" id="PS01029">
    <property type="entry name" value="DEHYDROQUINASE_II"/>
    <property type="match status" value="1"/>
</dbReference>
<sequence>MSDKFHILLLNGPNLNLLGTREPEKYGYTTLAEIVSQLEIQAQGMDVALSHLQSNAEHALIDSIHQARGNTDFILINPAAFTHTSVALRDALLGVQIPFIEIHLSNVHAREPFRHHSYLSDIAVGVICGLGADGYNFALQAAVNRLSKSN</sequence>